<comment type="function">
    <text evidence="1">IF-3 binds to the 30S ribosomal subunit and shifts the equilibrium between 70S ribosomes and their 50S and 30S subunits in favor of the free subunits, thus enhancing the availability of 30S subunits on which protein synthesis initiation begins.</text>
</comment>
<comment type="subunit">
    <text evidence="1">Monomer.</text>
</comment>
<comment type="subcellular location">
    <subcellularLocation>
        <location evidence="1">Cytoplasm</location>
    </subcellularLocation>
</comment>
<comment type="similarity">
    <text evidence="1">Belongs to the IF-3 family.</text>
</comment>
<accession>B4UAN5</accession>
<gene>
    <name evidence="1" type="primary">infC</name>
    <name type="ordered locus">AnaeK_1903</name>
</gene>
<evidence type="ECO:0000255" key="1">
    <source>
        <dbReference type="HAMAP-Rule" id="MF_00080"/>
    </source>
</evidence>
<evidence type="ECO:0000256" key="2">
    <source>
        <dbReference type="SAM" id="MobiDB-lite"/>
    </source>
</evidence>
<reference key="1">
    <citation type="submission" date="2008-08" db="EMBL/GenBank/DDBJ databases">
        <title>Complete sequence of Anaeromyxobacter sp. K.</title>
        <authorList>
            <consortium name="US DOE Joint Genome Institute"/>
            <person name="Lucas S."/>
            <person name="Copeland A."/>
            <person name="Lapidus A."/>
            <person name="Glavina del Rio T."/>
            <person name="Dalin E."/>
            <person name="Tice H."/>
            <person name="Bruce D."/>
            <person name="Goodwin L."/>
            <person name="Pitluck S."/>
            <person name="Saunders E."/>
            <person name="Brettin T."/>
            <person name="Detter J.C."/>
            <person name="Han C."/>
            <person name="Larimer F."/>
            <person name="Land M."/>
            <person name="Hauser L."/>
            <person name="Kyrpides N."/>
            <person name="Ovchinnikiva G."/>
            <person name="Beliaev A."/>
        </authorList>
    </citation>
    <scope>NUCLEOTIDE SEQUENCE [LARGE SCALE GENOMIC DNA]</scope>
    <source>
        <strain>K</strain>
    </source>
</reference>
<name>IF3_ANASK</name>
<protein>
    <recommendedName>
        <fullName evidence="1">Translation initiation factor IF-3</fullName>
    </recommendedName>
</protein>
<dbReference type="EMBL" id="CP001131">
    <property type="protein sequence ID" value="ACG73131.1"/>
    <property type="molecule type" value="Genomic_DNA"/>
</dbReference>
<dbReference type="RefSeq" id="WP_012525945.1">
    <property type="nucleotide sequence ID" value="NC_011145.1"/>
</dbReference>
<dbReference type="SMR" id="B4UAN5"/>
<dbReference type="KEGG" id="ank:AnaeK_1903"/>
<dbReference type="HOGENOM" id="CLU_054919_0_3_7"/>
<dbReference type="OrthoDB" id="9806014at2"/>
<dbReference type="Proteomes" id="UP000001871">
    <property type="component" value="Chromosome"/>
</dbReference>
<dbReference type="GO" id="GO:0005829">
    <property type="term" value="C:cytosol"/>
    <property type="evidence" value="ECO:0007669"/>
    <property type="project" value="TreeGrafter"/>
</dbReference>
<dbReference type="GO" id="GO:0016020">
    <property type="term" value="C:membrane"/>
    <property type="evidence" value="ECO:0007669"/>
    <property type="project" value="TreeGrafter"/>
</dbReference>
<dbReference type="GO" id="GO:0043022">
    <property type="term" value="F:ribosome binding"/>
    <property type="evidence" value="ECO:0007669"/>
    <property type="project" value="TreeGrafter"/>
</dbReference>
<dbReference type="GO" id="GO:0003743">
    <property type="term" value="F:translation initiation factor activity"/>
    <property type="evidence" value="ECO:0007669"/>
    <property type="project" value="UniProtKB-UniRule"/>
</dbReference>
<dbReference type="GO" id="GO:0032790">
    <property type="term" value="P:ribosome disassembly"/>
    <property type="evidence" value="ECO:0007669"/>
    <property type="project" value="TreeGrafter"/>
</dbReference>
<dbReference type="FunFam" id="3.10.20.80:FF:000001">
    <property type="entry name" value="Translation initiation factor IF-3"/>
    <property type="match status" value="1"/>
</dbReference>
<dbReference type="FunFam" id="3.30.110.10:FF:000001">
    <property type="entry name" value="Translation initiation factor IF-3"/>
    <property type="match status" value="1"/>
</dbReference>
<dbReference type="Gene3D" id="3.30.110.10">
    <property type="entry name" value="Translation initiation factor 3 (IF-3), C-terminal domain"/>
    <property type="match status" value="1"/>
</dbReference>
<dbReference type="Gene3D" id="3.10.20.80">
    <property type="entry name" value="Translation initiation factor 3 (IF-3), N-terminal domain"/>
    <property type="match status" value="1"/>
</dbReference>
<dbReference type="HAMAP" id="MF_00080">
    <property type="entry name" value="IF_3"/>
    <property type="match status" value="1"/>
</dbReference>
<dbReference type="InterPro" id="IPR036788">
    <property type="entry name" value="T_IF-3_C_sf"/>
</dbReference>
<dbReference type="InterPro" id="IPR036787">
    <property type="entry name" value="T_IF-3_N_sf"/>
</dbReference>
<dbReference type="InterPro" id="IPR001288">
    <property type="entry name" value="Translation_initiation_fac_3"/>
</dbReference>
<dbReference type="InterPro" id="IPR019815">
    <property type="entry name" value="Translation_initiation_fac_3_C"/>
</dbReference>
<dbReference type="InterPro" id="IPR019814">
    <property type="entry name" value="Translation_initiation_fac_3_N"/>
</dbReference>
<dbReference type="NCBIfam" id="TIGR00168">
    <property type="entry name" value="infC"/>
    <property type="match status" value="1"/>
</dbReference>
<dbReference type="PANTHER" id="PTHR10938">
    <property type="entry name" value="TRANSLATION INITIATION FACTOR IF-3"/>
    <property type="match status" value="1"/>
</dbReference>
<dbReference type="PANTHER" id="PTHR10938:SF0">
    <property type="entry name" value="TRANSLATION INITIATION FACTOR IF-3, MITOCHONDRIAL"/>
    <property type="match status" value="1"/>
</dbReference>
<dbReference type="Pfam" id="PF00707">
    <property type="entry name" value="IF3_C"/>
    <property type="match status" value="1"/>
</dbReference>
<dbReference type="Pfam" id="PF05198">
    <property type="entry name" value="IF3_N"/>
    <property type="match status" value="1"/>
</dbReference>
<dbReference type="SUPFAM" id="SSF55200">
    <property type="entry name" value="Translation initiation factor IF3, C-terminal domain"/>
    <property type="match status" value="1"/>
</dbReference>
<dbReference type="SUPFAM" id="SSF54364">
    <property type="entry name" value="Translation initiation factor IF3, N-terminal domain"/>
    <property type="match status" value="1"/>
</dbReference>
<feature type="chain" id="PRO_1000092769" description="Translation initiation factor IF-3">
    <location>
        <begin position="1"/>
        <end position="232"/>
    </location>
</feature>
<feature type="region of interest" description="Disordered" evidence="2">
    <location>
        <begin position="1"/>
        <end position="21"/>
    </location>
</feature>
<feature type="region of interest" description="Disordered" evidence="2">
    <location>
        <begin position="184"/>
        <end position="232"/>
    </location>
</feature>
<feature type="compositionally biased region" description="Low complexity" evidence="2">
    <location>
        <begin position="193"/>
        <end position="208"/>
    </location>
</feature>
<feature type="compositionally biased region" description="Pro residues" evidence="2">
    <location>
        <begin position="209"/>
        <end position="222"/>
    </location>
</feature>
<feature type="compositionally biased region" description="Low complexity" evidence="2">
    <location>
        <begin position="223"/>
        <end position="232"/>
    </location>
</feature>
<organism>
    <name type="scientific">Anaeromyxobacter sp. (strain K)</name>
    <dbReference type="NCBI Taxonomy" id="447217"/>
    <lineage>
        <taxon>Bacteria</taxon>
        <taxon>Pseudomonadati</taxon>
        <taxon>Myxococcota</taxon>
        <taxon>Myxococcia</taxon>
        <taxon>Myxococcales</taxon>
        <taxon>Cystobacterineae</taxon>
        <taxon>Anaeromyxobacteraceae</taxon>
        <taxon>Anaeromyxobacter</taxon>
    </lineage>
</organism>
<sequence>MAIQHRDPRGGGGSRDARTNRRIKAREVRVIGAEGEQLGVLPIDQALARAQELGMDLVEVSPMAKPPVCKIMDYGRFKYLEKKKQNEAKKKQVVVQLKEVKLRPRTEEHDYDTKIKKVRAFLGEANKARITVMFRGREMSHRELGQKVLQRVIEDLRDVAVIESAPRMEGRQMFMILAPNPKMLQSQRDKAKAAAAAAPAAAPAAGAPAPTPAPAPAAPAPAPAAADPAAQR</sequence>
<keyword id="KW-0963">Cytoplasm</keyword>
<keyword id="KW-0396">Initiation factor</keyword>
<keyword id="KW-0648">Protein biosynthesis</keyword>
<proteinExistence type="inferred from homology"/>